<protein>
    <recommendedName>
        <fullName evidence="1">Potassium-transporting ATPase potassium-binding subunit</fullName>
    </recommendedName>
    <alternativeName>
        <fullName evidence="1">ATP phosphohydrolase [potassium-transporting] A chain</fullName>
    </alternativeName>
    <alternativeName>
        <fullName evidence="1">Potassium-binding and translocating subunit A</fullName>
    </alternativeName>
    <alternativeName>
        <fullName evidence="1">Potassium-translocating ATPase A chain</fullName>
    </alternativeName>
</protein>
<comment type="function">
    <text evidence="1">Part of the high-affinity ATP-driven potassium transport (or Kdp) system, which catalyzes the hydrolysis of ATP coupled with the electrogenic transport of potassium into the cytoplasm. This subunit binds the periplasmic potassium ions and delivers the ions to the membrane domain of KdpB through an intramembrane tunnel.</text>
</comment>
<comment type="subunit">
    <text evidence="1">The system is composed of three essential subunits: KdpA, KdpB and KdpC.</text>
</comment>
<comment type="subcellular location">
    <subcellularLocation>
        <location evidence="1">Cell inner membrane</location>
        <topology evidence="1">Multi-pass membrane protein</topology>
    </subcellularLocation>
</comment>
<comment type="similarity">
    <text evidence="1">Belongs to the KdpA family.</text>
</comment>
<accession>B6HYQ6</accession>
<feature type="chain" id="PRO_1000114680" description="Potassium-transporting ATPase potassium-binding subunit">
    <location>
        <begin position="1"/>
        <end position="557"/>
    </location>
</feature>
<feature type="transmembrane region" description="Helical" evidence="1">
    <location>
        <begin position="5"/>
        <end position="25"/>
    </location>
</feature>
<feature type="transmembrane region" description="Helical" evidence="1">
    <location>
        <begin position="63"/>
        <end position="83"/>
    </location>
</feature>
<feature type="transmembrane region" description="Helical" evidence="1">
    <location>
        <begin position="132"/>
        <end position="152"/>
    </location>
</feature>
<feature type="transmembrane region" description="Helical" evidence="1">
    <location>
        <begin position="170"/>
        <end position="190"/>
    </location>
</feature>
<feature type="transmembrane region" description="Helical" evidence="1">
    <location>
        <begin position="253"/>
        <end position="273"/>
    </location>
</feature>
<feature type="transmembrane region" description="Helical" evidence="1">
    <location>
        <begin position="283"/>
        <end position="303"/>
    </location>
</feature>
<feature type="transmembrane region" description="Helical" evidence="1">
    <location>
        <begin position="329"/>
        <end position="349"/>
    </location>
</feature>
<feature type="transmembrane region" description="Helical" evidence="1">
    <location>
        <begin position="356"/>
        <end position="376"/>
    </location>
</feature>
<feature type="transmembrane region" description="Helical" evidence="1">
    <location>
        <begin position="379"/>
        <end position="399"/>
    </location>
</feature>
<feature type="transmembrane region" description="Helical" evidence="1">
    <location>
        <begin position="416"/>
        <end position="436"/>
    </location>
</feature>
<feature type="transmembrane region" description="Helical" evidence="1">
    <location>
        <begin position="484"/>
        <end position="504"/>
    </location>
</feature>
<feature type="transmembrane region" description="Helical" evidence="1">
    <location>
        <begin position="526"/>
        <end position="546"/>
    </location>
</feature>
<keyword id="KW-0997">Cell inner membrane</keyword>
<keyword id="KW-1003">Cell membrane</keyword>
<keyword id="KW-0406">Ion transport</keyword>
<keyword id="KW-0472">Membrane</keyword>
<keyword id="KW-0630">Potassium</keyword>
<keyword id="KW-0633">Potassium transport</keyword>
<keyword id="KW-0812">Transmembrane</keyword>
<keyword id="KW-1133">Transmembrane helix</keyword>
<keyword id="KW-0813">Transport</keyword>
<sequence>MAAQGFLLIATFLLVLMVLARPLGSGLARLINDIPLPGTTGVERVLFRALGVSDREMNWKQYLCAILGLNMLGLAVLFFMLLGQHYLPLNPQQLPGLSWDLALNTAVSFVTNTNWQSYSGETTLSYFSQMAGLTVQNFLSAASGIAVIFALIRAFTRQSMSTLGNAWVDLLRITLWVLVPVALLIALFFIQQGALQNFQPYQAVNTVEGAQQLLPMGPVASQEAIKMLGTNGGGFFNANSSHPFENPTALTNFVQMLAIFLIPTALCFAFGEVTGDRRQGRMLLWAMSVIFVICVGVVMWAEVQGNPHLLALGADSSINMEGKESRFGVLVSSLFAVVTTAASCGAVIAMHDSFTALGGMVPMWLMQIGEVVFGGVGSGLYGMMLFVLLAVFIAGLMIGRTPEYLGKKIDVREMKLTALAILVTPTLVLMGAALAMMTDAGRSAMLNPGPHGFSEVLYAVSSAANNNGSAFAGLSANSPFWNCLLAFCMFVGRFGVIIPVMAIAGSLVSKKSQPASSGTLPTHGPLFVGLLIGTVLLVGALTFIPALALGPVAEYLS</sequence>
<dbReference type="EMBL" id="AP009240">
    <property type="protein sequence ID" value="BAG76282.1"/>
    <property type="molecule type" value="Genomic_DNA"/>
</dbReference>
<dbReference type="RefSeq" id="WP_000741137.1">
    <property type="nucleotide sequence ID" value="NC_011415.1"/>
</dbReference>
<dbReference type="SMR" id="B6HYQ6"/>
<dbReference type="KEGG" id="ecy:ECSE_0758"/>
<dbReference type="HOGENOM" id="CLU_018614_3_0_6"/>
<dbReference type="Proteomes" id="UP000008199">
    <property type="component" value="Chromosome"/>
</dbReference>
<dbReference type="GO" id="GO:0005886">
    <property type="term" value="C:plasma membrane"/>
    <property type="evidence" value="ECO:0007669"/>
    <property type="project" value="UniProtKB-SubCell"/>
</dbReference>
<dbReference type="GO" id="GO:0008556">
    <property type="term" value="F:P-type potassium transmembrane transporter activity"/>
    <property type="evidence" value="ECO:0007669"/>
    <property type="project" value="InterPro"/>
</dbReference>
<dbReference type="GO" id="GO:0030955">
    <property type="term" value="F:potassium ion binding"/>
    <property type="evidence" value="ECO:0007669"/>
    <property type="project" value="UniProtKB-UniRule"/>
</dbReference>
<dbReference type="HAMAP" id="MF_00275">
    <property type="entry name" value="KdpA"/>
    <property type="match status" value="1"/>
</dbReference>
<dbReference type="InterPro" id="IPR004623">
    <property type="entry name" value="KdpA"/>
</dbReference>
<dbReference type="NCBIfam" id="TIGR00680">
    <property type="entry name" value="kdpA"/>
    <property type="match status" value="1"/>
</dbReference>
<dbReference type="PANTHER" id="PTHR30607">
    <property type="entry name" value="POTASSIUM-TRANSPORTING ATPASE A CHAIN"/>
    <property type="match status" value="1"/>
</dbReference>
<dbReference type="PANTHER" id="PTHR30607:SF2">
    <property type="entry name" value="POTASSIUM-TRANSPORTING ATPASE POTASSIUM-BINDING SUBUNIT"/>
    <property type="match status" value="1"/>
</dbReference>
<dbReference type="Pfam" id="PF03814">
    <property type="entry name" value="KdpA"/>
    <property type="match status" value="1"/>
</dbReference>
<dbReference type="PIRSF" id="PIRSF001294">
    <property type="entry name" value="K_ATPaseA"/>
    <property type="match status" value="1"/>
</dbReference>
<proteinExistence type="inferred from homology"/>
<name>KDPA_ECOSE</name>
<gene>
    <name evidence="1" type="primary">kdpA</name>
    <name type="ordered locus">ECSE_0758</name>
</gene>
<organism>
    <name type="scientific">Escherichia coli (strain SE11)</name>
    <dbReference type="NCBI Taxonomy" id="409438"/>
    <lineage>
        <taxon>Bacteria</taxon>
        <taxon>Pseudomonadati</taxon>
        <taxon>Pseudomonadota</taxon>
        <taxon>Gammaproteobacteria</taxon>
        <taxon>Enterobacterales</taxon>
        <taxon>Enterobacteriaceae</taxon>
        <taxon>Escherichia</taxon>
    </lineage>
</organism>
<evidence type="ECO:0000255" key="1">
    <source>
        <dbReference type="HAMAP-Rule" id="MF_00275"/>
    </source>
</evidence>
<reference key="1">
    <citation type="journal article" date="2008" name="DNA Res.">
        <title>Complete genome sequence and comparative analysis of the wild-type commensal Escherichia coli strain SE11 isolated from a healthy adult.</title>
        <authorList>
            <person name="Oshima K."/>
            <person name="Toh H."/>
            <person name="Ogura Y."/>
            <person name="Sasamoto H."/>
            <person name="Morita H."/>
            <person name="Park S.-H."/>
            <person name="Ooka T."/>
            <person name="Iyoda S."/>
            <person name="Taylor T.D."/>
            <person name="Hayashi T."/>
            <person name="Itoh K."/>
            <person name="Hattori M."/>
        </authorList>
    </citation>
    <scope>NUCLEOTIDE SEQUENCE [LARGE SCALE GENOMIC DNA]</scope>
    <source>
        <strain>SE11</strain>
    </source>
</reference>